<evidence type="ECO:0000255" key="1">
    <source>
        <dbReference type="PROSITE-ProRule" id="PRU00448"/>
    </source>
</evidence>
<evidence type="ECO:0000269" key="2">
    <source>
    </source>
</evidence>
<organism>
    <name type="scientific">Rattus norvegicus</name>
    <name type="common">Rat</name>
    <dbReference type="NCBI Taxonomy" id="10116"/>
    <lineage>
        <taxon>Eukaryota</taxon>
        <taxon>Metazoa</taxon>
        <taxon>Chordata</taxon>
        <taxon>Craniata</taxon>
        <taxon>Vertebrata</taxon>
        <taxon>Euteleostomi</taxon>
        <taxon>Mammalia</taxon>
        <taxon>Eutheria</taxon>
        <taxon>Euarchontoglires</taxon>
        <taxon>Glires</taxon>
        <taxon>Rodentia</taxon>
        <taxon>Myomorpha</taxon>
        <taxon>Muroidea</taxon>
        <taxon>Muridae</taxon>
        <taxon>Murinae</taxon>
        <taxon>Rattus</taxon>
    </lineage>
</organism>
<protein>
    <recommendedName>
        <fullName>Secretagogin</fullName>
    </recommendedName>
</protein>
<feature type="chain" id="PRO_0000330626" description="Secretagogin">
    <location>
        <begin position="1"/>
        <end position="276"/>
    </location>
</feature>
<feature type="domain" description="EF-hand 1" evidence="1">
    <location>
        <begin position="12"/>
        <end position="47"/>
    </location>
</feature>
<feature type="domain" description="EF-hand 2" evidence="1">
    <location>
        <begin position="105"/>
        <end position="140"/>
    </location>
</feature>
<feature type="domain" description="EF-hand 3" evidence="1">
    <location>
        <begin position="149"/>
        <end position="184"/>
    </location>
</feature>
<feature type="domain" description="EF-hand 4" evidence="1">
    <location>
        <begin position="197"/>
        <end position="232"/>
    </location>
</feature>
<feature type="domain" description="EF-hand 5" evidence="1">
    <location>
        <begin position="240"/>
        <end position="276"/>
    </location>
</feature>
<feature type="binding site" evidence="1">
    <location>
        <position position="118"/>
    </location>
    <ligand>
        <name>Ca(2+)</name>
        <dbReference type="ChEBI" id="CHEBI:29108"/>
        <label>1</label>
    </ligand>
</feature>
<feature type="binding site" evidence="1">
    <location>
        <position position="120"/>
    </location>
    <ligand>
        <name>Ca(2+)</name>
        <dbReference type="ChEBI" id="CHEBI:29108"/>
        <label>1</label>
    </ligand>
</feature>
<feature type="binding site" evidence="1">
    <location>
        <position position="122"/>
    </location>
    <ligand>
        <name>Ca(2+)</name>
        <dbReference type="ChEBI" id="CHEBI:29108"/>
        <label>1</label>
    </ligand>
</feature>
<feature type="binding site" evidence="1">
    <location>
        <position position="129"/>
    </location>
    <ligand>
        <name>Ca(2+)</name>
        <dbReference type="ChEBI" id="CHEBI:29108"/>
        <label>1</label>
    </ligand>
</feature>
<feature type="binding site" evidence="1">
    <location>
        <position position="162"/>
    </location>
    <ligand>
        <name>Ca(2+)</name>
        <dbReference type="ChEBI" id="CHEBI:29108"/>
        <label>2</label>
    </ligand>
</feature>
<feature type="binding site" evidence="1">
    <location>
        <position position="164"/>
    </location>
    <ligand>
        <name>Ca(2+)</name>
        <dbReference type="ChEBI" id="CHEBI:29108"/>
        <label>2</label>
    </ligand>
</feature>
<feature type="binding site" evidence="1">
    <location>
        <position position="166"/>
    </location>
    <ligand>
        <name>Ca(2+)</name>
        <dbReference type="ChEBI" id="CHEBI:29108"/>
        <label>2</label>
    </ligand>
</feature>
<feature type="binding site" evidence="1">
    <location>
        <position position="168"/>
    </location>
    <ligand>
        <name>Ca(2+)</name>
        <dbReference type="ChEBI" id="CHEBI:29108"/>
        <label>2</label>
    </ligand>
</feature>
<feature type="binding site" evidence="1">
    <location>
        <position position="173"/>
    </location>
    <ligand>
        <name>Ca(2+)</name>
        <dbReference type="ChEBI" id="CHEBI:29108"/>
        <label>2</label>
    </ligand>
</feature>
<feature type="binding site" evidence="1">
    <location>
        <position position="210"/>
    </location>
    <ligand>
        <name>Ca(2+)</name>
        <dbReference type="ChEBI" id="CHEBI:29108"/>
        <label>3</label>
    </ligand>
</feature>
<feature type="binding site" evidence="1">
    <location>
        <position position="212"/>
    </location>
    <ligand>
        <name>Ca(2+)</name>
        <dbReference type="ChEBI" id="CHEBI:29108"/>
        <label>3</label>
    </ligand>
</feature>
<feature type="binding site" evidence="1">
    <location>
        <position position="214"/>
    </location>
    <ligand>
        <name>Ca(2+)</name>
        <dbReference type="ChEBI" id="CHEBI:29108"/>
        <label>3</label>
    </ligand>
</feature>
<feature type="binding site" evidence="1">
    <location>
        <position position="221"/>
    </location>
    <ligand>
        <name>Ca(2+)</name>
        <dbReference type="ChEBI" id="CHEBI:29108"/>
        <label>3</label>
    </ligand>
</feature>
<feature type="binding site" evidence="1">
    <location>
        <position position="254"/>
    </location>
    <ligand>
        <name>Ca(2+)</name>
        <dbReference type="ChEBI" id="CHEBI:29108"/>
        <label>4</label>
    </ligand>
</feature>
<feature type="binding site" evidence="1">
    <location>
        <position position="256"/>
    </location>
    <ligand>
        <name>Ca(2+)</name>
        <dbReference type="ChEBI" id="CHEBI:29108"/>
        <label>4</label>
    </ligand>
</feature>
<feature type="binding site" evidence="1">
    <location>
        <position position="258"/>
    </location>
    <ligand>
        <name>Ca(2+)</name>
        <dbReference type="ChEBI" id="CHEBI:29108"/>
        <label>4</label>
    </ligand>
</feature>
<feature type="binding site" evidence="1">
    <location>
        <position position="260"/>
    </location>
    <ligand>
        <name>Ca(2+)</name>
        <dbReference type="ChEBI" id="CHEBI:29108"/>
        <label>4</label>
    </ligand>
</feature>
<feature type="binding site" evidence="1">
    <location>
        <position position="265"/>
    </location>
    <ligand>
        <name>Ca(2+)</name>
        <dbReference type="ChEBI" id="CHEBI:29108"/>
        <label>4</label>
    </ligand>
</feature>
<sequence>MDNAHRQTQAHLDAACFWQIWQRFDKDEKGYIKETELDAFFDDLLAKFGIEDTLMEENVQKMKEQLMVGHDISKEGRILMKELASMFLSEDENFLLFFRLETPLDNSVEFMQIWRKYDADSSGFISAAELSNFLRDLFLHHKKVISEAELEEYTSTMEKIFDRNKDGRLDLNDLARILALQENFLLQFKMDASSTEERKRDFEKIFAHYDVSKTGALEGPEVDGFVKDMMELVQPSISGVDLDKFREILLRHCDVNKDGKIQKSELALCLGLKINP</sequence>
<comment type="subcellular location">
    <subcellularLocation>
        <location evidence="2">Cytoplasm</location>
    </subcellularLocation>
    <subcellularLocation>
        <location evidence="2">Secreted</location>
    </subcellularLocation>
    <subcellularLocation>
        <location evidence="2">Cytoplasmic vesicle</location>
        <location evidence="2">Secretory vesicle membrane</location>
        <topology evidence="2">Peripheral membrane protein</topology>
        <orientation evidence="2">Cytoplasmic side</orientation>
    </subcellularLocation>
    <text>Predominantly cytoplasmic. A small proportion is associated with secretory granules and membrane fractions. A small proportion is detected in the medium of cultured insuloma cells. Dexamethasone promotes the export into the culture medium.</text>
</comment>
<comment type="tissue specificity">
    <text evidence="2">Highly expressed in pancreas, in particular in pancreatic islets and pancreatic beta-cells. Detected in prostate, adrenal gland, small intestine, stomach and thyroid (at protein level).</text>
</comment>
<comment type="induction">
    <text evidence="2">Down-regulated in cultured insuloma cells after dexamethasone treatment.</text>
</comment>
<dbReference type="EMBL" id="AY513659">
    <property type="protein sequence ID" value="AAR97942.1"/>
    <property type="molecule type" value="mRNA"/>
</dbReference>
<dbReference type="RefSeq" id="NP_963855.1">
    <property type="nucleotide sequence ID" value="NM_201561.1"/>
</dbReference>
<dbReference type="SMR" id="Q6R556"/>
<dbReference type="BioGRID" id="258584">
    <property type="interactions" value="1"/>
</dbReference>
<dbReference type="FunCoup" id="Q6R556">
    <property type="interactions" value="22"/>
</dbReference>
<dbReference type="STRING" id="10116.ENSRNOP00000022329"/>
<dbReference type="PhosphoSitePlus" id="Q6R556"/>
<dbReference type="PaxDb" id="10116-ENSRNOP00000022329"/>
<dbReference type="GeneID" id="306942"/>
<dbReference type="KEGG" id="rno:306942"/>
<dbReference type="UCSC" id="RGD:1303281">
    <property type="organism name" value="rat"/>
</dbReference>
<dbReference type="AGR" id="RGD:1303281"/>
<dbReference type="CTD" id="10590"/>
<dbReference type="RGD" id="1303281">
    <property type="gene designation" value="Scgn"/>
</dbReference>
<dbReference type="eggNOG" id="KOG0027">
    <property type="taxonomic scope" value="Eukaryota"/>
</dbReference>
<dbReference type="InParanoid" id="Q6R556"/>
<dbReference type="PhylomeDB" id="Q6R556"/>
<dbReference type="PRO" id="PR:Q6R556"/>
<dbReference type="Proteomes" id="UP000002494">
    <property type="component" value="Unplaced"/>
</dbReference>
<dbReference type="GO" id="GO:0005829">
    <property type="term" value="C:cytosol"/>
    <property type="evidence" value="ECO:0000318"/>
    <property type="project" value="GO_Central"/>
</dbReference>
<dbReference type="GO" id="GO:0030425">
    <property type="term" value="C:dendrite"/>
    <property type="evidence" value="ECO:0000318"/>
    <property type="project" value="GO_Central"/>
</dbReference>
<dbReference type="GO" id="GO:0005576">
    <property type="term" value="C:extracellular region"/>
    <property type="evidence" value="ECO:0007669"/>
    <property type="project" value="UniProtKB-SubCell"/>
</dbReference>
<dbReference type="GO" id="GO:0005634">
    <property type="term" value="C:nucleus"/>
    <property type="evidence" value="ECO:0000318"/>
    <property type="project" value="GO_Central"/>
</dbReference>
<dbReference type="GO" id="GO:0045202">
    <property type="term" value="C:synapse"/>
    <property type="evidence" value="ECO:0000318"/>
    <property type="project" value="GO_Central"/>
</dbReference>
<dbReference type="GO" id="GO:0043195">
    <property type="term" value="C:terminal bouton"/>
    <property type="evidence" value="ECO:0000318"/>
    <property type="project" value="GO_Central"/>
</dbReference>
<dbReference type="GO" id="GO:0030658">
    <property type="term" value="C:transport vesicle membrane"/>
    <property type="evidence" value="ECO:0007669"/>
    <property type="project" value="UniProtKB-SubCell"/>
</dbReference>
<dbReference type="GO" id="GO:0005509">
    <property type="term" value="F:calcium ion binding"/>
    <property type="evidence" value="ECO:0000318"/>
    <property type="project" value="GO_Central"/>
</dbReference>
<dbReference type="CDD" id="cd16178">
    <property type="entry name" value="EFh_HEF_SCGN"/>
    <property type="match status" value="1"/>
</dbReference>
<dbReference type="FunFam" id="1.10.238.10:FF:000142">
    <property type="entry name" value="Secretagogin"/>
    <property type="match status" value="1"/>
</dbReference>
<dbReference type="FunFam" id="1.10.238.10:FF:000186">
    <property type="entry name" value="Secretagogin"/>
    <property type="match status" value="1"/>
</dbReference>
<dbReference type="Gene3D" id="1.10.238.10">
    <property type="entry name" value="EF-hand"/>
    <property type="match status" value="3"/>
</dbReference>
<dbReference type="InterPro" id="IPR051001">
    <property type="entry name" value="Calbindin_Ca-bind"/>
</dbReference>
<dbReference type="InterPro" id="IPR011992">
    <property type="entry name" value="EF-hand-dom_pair"/>
</dbReference>
<dbReference type="InterPro" id="IPR018247">
    <property type="entry name" value="EF_Hand_1_Ca_BS"/>
</dbReference>
<dbReference type="InterPro" id="IPR002048">
    <property type="entry name" value="EF_hand_dom"/>
</dbReference>
<dbReference type="InterPro" id="IPR035798">
    <property type="entry name" value="EFh_SCGN"/>
</dbReference>
<dbReference type="PANTHER" id="PTHR19972">
    <property type="entry name" value="CALBINDIN"/>
    <property type="match status" value="1"/>
</dbReference>
<dbReference type="PANTHER" id="PTHR19972:SF15">
    <property type="entry name" value="SECRETAGOGIN"/>
    <property type="match status" value="1"/>
</dbReference>
<dbReference type="Pfam" id="PF13202">
    <property type="entry name" value="EF-hand_5"/>
    <property type="match status" value="1"/>
</dbReference>
<dbReference type="Pfam" id="PF13499">
    <property type="entry name" value="EF-hand_7"/>
    <property type="match status" value="1"/>
</dbReference>
<dbReference type="SMART" id="SM00054">
    <property type="entry name" value="EFh"/>
    <property type="match status" value="5"/>
</dbReference>
<dbReference type="SUPFAM" id="SSF47473">
    <property type="entry name" value="EF-hand"/>
    <property type="match status" value="2"/>
</dbReference>
<dbReference type="PROSITE" id="PS00018">
    <property type="entry name" value="EF_HAND_1"/>
    <property type="match status" value="4"/>
</dbReference>
<dbReference type="PROSITE" id="PS50222">
    <property type="entry name" value="EF_HAND_2"/>
    <property type="match status" value="5"/>
</dbReference>
<keyword id="KW-0106">Calcium</keyword>
<keyword id="KW-0963">Cytoplasm</keyword>
<keyword id="KW-0968">Cytoplasmic vesicle</keyword>
<keyword id="KW-0472">Membrane</keyword>
<keyword id="KW-0479">Metal-binding</keyword>
<keyword id="KW-1185">Reference proteome</keyword>
<keyword id="KW-0677">Repeat</keyword>
<keyword id="KW-0964">Secreted</keyword>
<gene>
    <name type="primary">Scgn</name>
</gene>
<proteinExistence type="evidence at protein level"/>
<name>SEGN_RAT</name>
<reference key="1">
    <citation type="journal article" date="2007" name="Am. J. Physiol.">
        <title>New functional aspects of the neuroendocrine marker secretagogin based on the characterization of its rat homolog.</title>
        <authorList>
            <person name="Gartner W."/>
            <person name="Vila G."/>
            <person name="Daneva T."/>
            <person name="Nabokikh A."/>
            <person name="Koc-Saral F."/>
            <person name="Ilhan A."/>
            <person name="Majdic O."/>
            <person name="Luger A."/>
            <person name="Wagner L."/>
        </authorList>
    </citation>
    <scope>NUCLEOTIDE SEQUENCE [MRNA]</scope>
    <scope>INDUCTION</scope>
    <scope>TISSUE SPECIFICITY</scope>
    <scope>SUBCELLULAR LOCATION</scope>
    <source>
        <tissue>Pancreas</tissue>
    </source>
</reference>
<accession>Q6R556</accession>